<evidence type="ECO:0000269" key="1">
    <source>
    </source>
</evidence>
<evidence type="ECO:0000305" key="2"/>
<evidence type="ECO:0000305" key="3">
    <source>
    </source>
</evidence>
<protein>
    <recommendedName>
        <fullName>Bacteriocin serracin-P 23 kDa subunit</fullName>
    </recommendedName>
</protein>
<proteinExistence type="evidence at protein level"/>
<keyword id="KW-0044">Antibiotic</keyword>
<keyword id="KW-0929">Antimicrobial</keyword>
<keyword id="KW-0078">Bacteriocin</keyword>
<keyword id="KW-0903">Direct protein sequencing</keyword>
<reference key="1">
    <citation type="journal article" date="2002" name="Appl. Environ. Microbiol.">
        <title>Characterization of serracin P, a phage-tail-like bacteriocin, and its activity against Erwinia amylovora, the fire blight pathogen.</title>
        <authorList>
            <person name="Jabrane A."/>
            <person name="Sabri A."/>
            <person name="Compere P."/>
            <person name="Jacques P."/>
            <person name="Vandenberghe I."/>
            <person name="Van Beeumen J."/>
            <person name="Thonart P."/>
        </authorList>
    </citation>
    <scope>PROTEIN SEQUENCE</scope>
    <scope>FUNCTION</scope>
    <source>
        <strain>J7</strain>
    </source>
</reference>
<feature type="chain" id="PRO_0000110583" description="Bacteriocin serracin-P 23 kDa subunit">
    <location>
        <begin position="1"/>
        <end position="22" status="greater than"/>
    </location>
</feature>
<feature type="non-terminal residue">
    <location>
        <position position="22"/>
    </location>
</feature>
<organism evidence="2">
    <name type="scientific">Serratia plymuthica</name>
    <dbReference type="NCBI Taxonomy" id="82996"/>
    <lineage>
        <taxon>Bacteria</taxon>
        <taxon>Pseudomonadati</taxon>
        <taxon>Pseudomonadota</taxon>
        <taxon>Gammaproteobacteria</taxon>
        <taxon>Enterobacterales</taxon>
        <taxon>Yersiniaceae</taxon>
        <taxon>Serratia</taxon>
    </lineage>
</organism>
<comment type="function">
    <text evidence="3">Major component of a prophage tail tube.</text>
</comment>
<comment type="function">
    <text evidence="1">Antibacterial activity against Gram-negative bacterium E.amylovora.</text>
</comment>
<sequence>ALPKKLKYLNLFNDGFNYMGVV</sequence>
<accession>P83378</accession>
<dbReference type="STRING" id="82996.ADP72_02370"/>
<dbReference type="GO" id="GO:0042742">
    <property type="term" value="P:defense response to bacterium"/>
    <property type="evidence" value="ECO:0007669"/>
    <property type="project" value="UniProtKB-KW"/>
</dbReference>
<dbReference type="GO" id="GO:0031640">
    <property type="term" value="P:killing of cells of another organism"/>
    <property type="evidence" value="ECO:0007669"/>
    <property type="project" value="UniProtKB-KW"/>
</dbReference>
<name>BSP23_SERPL</name>